<name>PIGY_HUMAN</name>
<reference key="1">
    <citation type="journal article" date="2005" name="Mol. Biol. Cell">
        <title>The initial enzyme for glycosylphosphatidylinositol biosynthesis requires PIG-Y, a seventh component.</title>
        <authorList>
            <person name="Murakami Y."/>
            <person name="Siripanyaphinyo U."/>
            <person name="Hong Y."/>
            <person name="Tashima Y."/>
            <person name="Maeda Y."/>
            <person name="Kinoshita T."/>
        </authorList>
    </citation>
    <scope>NUCLEOTIDE SEQUENCE [MRNA]</scope>
    <scope>PROTEIN SEQUENCE OF 1-10</scope>
    <scope>FUNCTION</scope>
    <scope>SUBCELLULAR LOCATION</scope>
    <scope>TOPOLOGY</scope>
    <scope>INTERACTION WITH PIGA</scope>
    <scope>COMPONENT OF GPI-GNT COMPLEX</scope>
</reference>
<reference key="2">
    <citation type="journal article" date="2004" name="Genome Res.">
        <title>The status, quality, and expansion of the NIH full-length cDNA project: the Mammalian Gene Collection (MGC).</title>
        <authorList>
            <consortium name="The MGC Project Team"/>
        </authorList>
    </citation>
    <scope>NUCLEOTIDE SEQUENCE [LARGE SCALE MRNA]</scope>
    <source>
        <tissue>Ovary</tissue>
    </source>
</reference>
<reference key="3">
    <citation type="journal article" date="2015" name="Hum. Mol. Genet.">
        <title>Mutations in PIGY: expanding the phenotype of inherited glycosylphosphatidylinositol deficiencies.</title>
        <authorList>
            <person name="Ilkovski B."/>
            <person name="Pagnamenta A.T."/>
            <person name="O'Grady G.L."/>
            <person name="Kinoshita T."/>
            <person name="Howard M.F."/>
            <person name="Lek M."/>
            <person name="Thomas B."/>
            <person name="Turner A."/>
            <person name="Christodoulou J."/>
            <person name="Sillence D."/>
            <person name="Knight S.J."/>
            <person name="Popitsch N."/>
            <person name="Keays D.A."/>
            <person name="Anzilotti C."/>
            <person name="Goriely A."/>
            <person name="Waddell L.B."/>
            <person name="Brilot F."/>
            <person name="North K.N."/>
            <person name="Kanzawa N."/>
            <person name="Macarthur D.G."/>
            <person name="Taylor J.C."/>
            <person name="Kini U."/>
            <person name="Murakami Y."/>
            <person name="Clarke N.F."/>
        </authorList>
    </citation>
    <scope>INVOLVEMENT IN HPMRS6</scope>
    <scope>VARIANT HPMRS6 PRO-46</scope>
</reference>
<organism>
    <name type="scientific">Homo sapiens</name>
    <name type="common">Human</name>
    <dbReference type="NCBI Taxonomy" id="9606"/>
    <lineage>
        <taxon>Eukaryota</taxon>
        <taxon>Metazoa</taxon>
        <taxon>Chordata</taxon>
        <taxon>Craniata</taxon>
        <taxon>Vertebrata</taxon>
        <taxon>Euteleostomi</taxon>
        <taxon>Mammalia</taxon>
        <taxon>Eutheria</taxon>
        <taxon>Euarchontoglires</taxon>
        <taxon>Primates</taxon>
        <taxon>Haplorrhini</taxon>
        <taxon>Catarrhini</taxon>
        <taxon>Hominidae</taxon>
        <taxon>Homo</taxon>
    </lineage>
</organism>
<comment type="function">
    <text evidence="2">Part of the glycosylphosphatidylinositol-N-acetylglucosaminyltransferase (GPI-GnT) complex that catalyzes the transfer of N-acetylglucosamine from UDP-N-acetylglucosamine to phosphatidylinositol and participates in the first step of GPI biosynthesis (PubMed:16162815). May act by regulating the catalytic subunit PIGA (PubMed:16162815).</text>
</comment>
<comment type="pathway">
    <text evidence="2">Glycolipid biosynthesis; glycosylphosphatidylinositol-anchor biosynthesis.</text>
</comment>
<comment type="subunit">
    <text evidence="2">Component of the glycosylphosphatidylinositol-N-acetylglucosaminyltransferase (GPI-GnT) complex composed at least by PIGA, PIGC, PIGH, PIGP, PIGQ, PIGY and DPM2 (PubMed:16162815). Interacts directly with PIGA; this interaction regulates glycosylphosphatidylinositol-N-acetylglucosaminyltransferase activity (PubMed:16162815). Does not interact with Ras proteins (PubMed:16162815).</text>
</comment>
<comment type="interaction">
    <interactant intactId="EBI-3920125">
        <id>Q3MUY2</id>
    </interactant>
    <interactant intactId="EBI-711490">
        <id>Q9UKR5</id>
        <label>ERG28</label>
    </interactant>
    <organismsDiffer>false</organismsDiffer>
    <experiments>3</experiments>
</comment>
<comment type="interaction">
    <interactant intactId="EBI-3920125">
        <id>Q3MUY2</id>
    </interactant>
    <interactant intactId="EBI-26643054">
        <id>P37287</id>
        <label>PIGA</label>
    </interactant>
    <organismsDiffer>false</organismsDiffer>
    <experiments>6</experiments>
</comment>
<comment type="interaction">
    <interactant intactId="EBI-3920125">
        <id>Q3MUY2</id>
    </interactant>
    <interactant intactId="EBI-12878352">
        <id>A0PK05</id>
        <label>TMEM72</label>
    </interactant>
    <organismsDiffer>false</organismsDiffer>
    <experiments>3</experiments>
</comment>
<comment type="subcellular location">
    <subcellularLocation>
        <location evidence="2">Endoplasmic reticulum membrane</location>
        <topology evidence="2">Multi-pass membrane protein</topology>
    </subcellularLocation>
</comment>
<comment type="disease" evidence="3">
    <disease id="DI-04648">
        <name>Hyperphosphatasia with impaired intellectual development syndrome 6</name>
        <acronym>HPMRS6</acronym>
        <description>An autosomal recessive, multisystem disorder characterized by severe developmental delay, dysmorphism, seizures, cataracts, and early death in some patients.</description>
        <dbReference type="MIM" id="616809"/>
    </disease>
    <text>The disease is caused by variants affecting the gene represented in this entry.</text>
</comment>
<comment type="miscellaneous">
    <text>PREY and PIGY, 2 apparently unrelated proteins, are respectively the product of an upstream and a downstream ORF contained in a single bicistronic transcript.</text>
</comment>
<evidence type="ECO:0000255" key="1"/>
<evidence type="ECO:0000269" key="2">
    <source>
    </source>
</evidence>
<evidence type="ECO:0000269" key="3">
    <source>
    </source>
</evidence>
<evidence type="ECO:0000305" key="4"/>
<evidence type="ECO:0000312" key="5">
    <source>
        <dbReference type="HGNC" id="HGNC:28213"/>
    </source>
</evidence>
<proteinExistence type="evidence at protein level"/>
<protein>
    <recommendedName>
        <fullName evidence="4">Phosphatidylinositol N-acetylglucosaminyltransferase subunit Y</fullName>
    </recommendedName>
    <alternativeName>
        <fullName>Phosphatidylinositol-glycan biosynthesis class Y protein</fullName>
        <shortName>PIG-Y</shortName>
    </alternativeName>
</protein>
<gene>
    <name evidence="5" type="primary">PIGY</name>
</gene>
<dbReference type="EMBL" id="AB206972">
    <property type="protein sequence ID" value="BAE44507.1"/>
    <property type="molecule type" value="mRNA"/>
</dbReference>
<dbReference type="EMBL" id="BC007876">
    <property type="protein sequence ID" value="AAH07876.2"/>
    <property type="molecule type" value="mRNA"/>
</dbReference>
<dbReference type="CCDS" id="CCDS54778.1"/>
<dbReference type="RefSeq" id="NP_001036081.1">
    <property type="nucleotide sequence ID" value="NM_001042616.3"/>
</dbReference>
<dbReference type="BioGRID" id="124417">
    <property type="interactions" value="5"/>
</dbReference>
<dbReference type="ComplexPortal" id="CPX-6502">
    <property type="entry name" value="Glycosylphosphatidylinositol-N-acetylglucosaminyltransferase complex"/>
</dbReference>
<dbReference type="FunCoup" id="Q3MUY2">
    <property type="interactions" value="108"/>
</dbReference>
<dbReference type="IntAct" id="Q3MUY2">
    <property type="interactions" value="5"/>
</dbReference>
<dbReference type="STRING" id="9606.ENSP00000432688"/>
<dbReference type="iPTMnet" id="Q3MUY2"/>
<dbReference type="PhosphoSitePlus" id="Q3MUY2"/>
<dbReference type="BioMuta" id="PIGY"/>
<dbReference type="PaxDb" id="9606-ENSP00000432688"/>
<dbReference type="PeptideAtlas" id="Q3MUY2"/>
<dbReference type="Antibodypedia" id="58497">
    <property type="antibodies" value="80 antibodies from 21 providers"/>
</dbReference>
<dbReference type="DNASU" id="84992"/>
<dbReference type="Ensembl" id="ENST00000527353.2">
    <property type="protein sequence ID" value="ENSP00000432688.1"/>
    <property type="gene ID" value="ENSG00000255072.2"/>
</dbReference>
<dbReference type="GeneID" id="84992"/>
<dbReference type="KEGG" id="hsa:84992"/>
<dbReference type="MANE-Select" id="ENST00000527353.2">
    <property type="protein sequence ID" value="ENSP00000432688.1"/>
    <property type="RefSeq nucleotide sequence ID" value="NM_001042616.3"/>
    <property type="RefSeq protein sequence ID" value="NP_001036081.1"/>
</dbReference>
<dbReference type="UCSC" id="uc062ydg.1">
    <property type="organism name" value="human"/>
</dbReference>
<dbReference type="AGR" id="HGNC:28213"/>
<dbReference type="CTD" id="84992"/>
<dbReference type="DisGeNET" id="84992"/>
<dbReference type="GeneCards" id="PIGY"/>
<dbReference type="HGNC" id="HGNC:28213">
    <property type="gene designation" value="PIGY"/>
</dbReference>
<dbReference type="HPA" id="ENSG00000255072">
    <property type="expression patterns" value="Low tissue specificity"/>
</dbReference>
<dbReference type="MalaCards" id="PIGY"/>
<dbReference type="MIM" id="610662">
    <property type="type" value="gene"/>
</dbReference>
<dbReference type="MIM" id="616809">
    <property type="type" value="phenotype"/>
</dbReference>
<dbReference type="neXtProt" id="NX_Q3MUY2"/>
<dbReference type="OpenTargets" id="ENSG00000255072"/>
<dbReference type="Orphanet" id="247262">
    <property type="disease" value="Hyperphosphatasia-intellectual disability syndrome"/>
</dbReference>
<dbReference type="PharmGKB" id="PA143485576"/>
<dbReference type="VEuPathDB" id="HostDB:ENSG00000255072"/>
<dbReference type="eggNOG" id="ENOG502S4A7">
    <property type="taxonomic scope" value="Eukaryota"/>
</dbReference>
<dbReference type="GeneTree" id="ENSGT00610000087446"/>
<dbReference type="HOGENOM" id="CLU_2978556_0_0_1"/>
<dbReference type="InParanoid" id="Q3MUY2"/>
<dbReference type="OMA" id="TNSLCFY"/>
<dbReference type="OrthoDB" id="8902753at2759"/>
<dbReference type="PAN-GO" id="Q3MUY2">
    <property type="GO annotations" value="2 GO annotations based on evolutionary models"/>
</dbReference>
<dbReference type="PhylomeDB" id="Q3MUY2"/>
<dbReference type="BRENDA" id="2.4.1.198">
    <property type="organism ID" value="2681"/>
</dbReference>
<dbReference type="PathwayCommons" id="Q3MUY2"/>
<dbReference type="Reactome" id="R-HSA-162710">
    <property type="pathway name" value="Synthesis of glycosylphosphatidylinositol (GPI)"/>
</dbReference>
<dbReference type="SignaLink" id="Q3MUY2"/>
<dbReference type="UniPathway" id="UPA00196"/>
<dbReference type="BioGRID-ORCS" id="84992">
    <property type="hits" value="117 hits in 1037 CRISPR screens"/>
</dbReference>
<dbReference type="ChiTaRS" id="PIGY">
    <property type="organism name" value="human"/>
</dbReference>
<dbReference type="GenomeRNAi" id="84992"/>
<dbReference type="Pharos" id="Q3MUY2">
    <property type="development level" value="Tbio"/>
</dbReference>
<dbReference type="PRO" id="PR:Q3MUY2"/>
<dbReference type="Proteomes" id="UP000005640">
    <property type="component" value="Chromosome 4"/>
</dbReference>
<dbReference type="RNAct" id="Q3MUY2">
    <property type="molecule type" value="protein"/>
</dbReference>
<dbReference type="Bgee" id="ENSG00000255072">
    <property type="expression patterns" value="Expressed in islet of Langerhans and 97 other cell types or tissues"/>
</dbReference>
<dbReference type="GO" id="GO:0005789">
    <property type="term" value="C:endoplasmic reticulum membrane"/>
    <property type="evidence" value="ECO:0000314"/>
    <property type="project" value="MGI"/>
</dbReference>
<dbReference type="GO" id="GO:0000506">
    <property type="term" value="C:glycosylphosphatidylinositol-N-acetylglucosaminyltransferase (GPI-GnT) complex"/>
    <property type="evidence" value="ECO:0000314"/>
    <property type="project" value="MGI"/>
</dbReference>
<dbReference type="GO" id="GO:0005886">
    <property type="term" value="C:plasma membrane"/>
    <property type="evidence" value="ECO:0000314"/>
    <property type="project" value="MGI"/>
</dbReference>
<dbReference type="GO" id="GO:0006506">
    <property type="term" value="P:GPI anchor biosynthetic process"/>
    <property type="evidence" value="ECO:0000314"/>
    <property type="project" value="MGI"/>
</dbReference>
<dbReference type="InterPro" id="IPR029164">
    <property type="entry name" value="PIG-Y"/>
</dbReference>
<dbReference type="PANTHER" id="PTHR39235">
    <property type="entry name" value="PHOSPHATIDYLINOSITOL N-ACETYLGLUCOSAMINYLTRANSFERASE SUBUNIT Y"/>
    <property type="match status" value="1"/>
</dbReference>
<dbReference type="PANTHER" id="PTHR39235:SF1">
    <property type="entry name" value="PHOSPHATIDYLINOSITOL N-ACETYLGLUCOSAMINYLTRANSFERASE SUBUNIT Y"/>
    <property type="match status" value="1"/>
</dbReference>
<dbReference type="Pfam" id="PF15159">
    <property type="entry name" value="PIG-Y"/>
    <property type="match status" value="1"/>
</dbReference>
<accession>Q3MUY2</accession>
<sequence>MFLSLPTLTVLIPLVSLAGLFYSASVEENFPQGCTSTASLCFYSLLLPITIPVYVFFHLWTWMGIKLFRHN</sequence>
<feature type="chain" id="PRO_0000246311" description="Phosphatidylinositol N-acetylglucosaminyltransferase subunit Y">
    <location>
        <begin position="1"/>
        <end position="71"/>
    </location>
</feature>
<feature type="topological domain" description="Cytoplasmic" evidence="1">
    <location>
        <begin position="1"/>
        <end position="3"/>
    </location>
</feature>
<feature type="transmembrane region" description="Helical" evidence="1">
    <location>
        <begin position="4"/>
        <end position="26"/>
    </location>
</feature>
<feature type="topological domain" description="Lumenal" evidence="1">
    <location>
        <begin position="27"/>
        <end position="44"/>
    </location>
</feature>
<feature type="transmembrane region" description="Helical" evidence="1">
    <location>
        <begin position="45"/>
        <end position="65"/>
    </location>
</feature>
<feature type="topological domain" description="Cytoplasmic" evidence="1">
    <location>
        <begin position="66"/>
        <end position="71"/>
    </location>
</feature>
<feature type="sequence variant" id="VAR_076351" description="In HPMRS6; may diminish protein expression and/or stability; decreases cell surface expression of GPI-anchored proteins, including CD55 and CD59, in skin fibroblasts from affected individual; dbSNP:rs869025322." evidence="3">
    <original>L</original>
    <variation>P</variation>
    <location>
        <position position="46"/>
    </location>
</feature>
<keyword id="KW-0903">Direct protein sequencing</keyword>
<keyword id="KW-0225">Disease variant</keyword>
<keyword id="KW-0256">Endoplasmic reticulum</keyword>
<keyword id="KW-0337">GPI-anchor biosynthesis</keyword>
<keyword id="KW-0991">Intellectual disability</keyword>
<keyword id="KW-0472">Membrane</keyword>
<keyword id="KW-1185">Reference proteome</keyword>
<keyword id="KW-0812">Transmembrane</keyword>
<keyword id="KW-1133">Transmembrane helix</keyword>